<protein>
    <recommendedName>
        <fullName>Uncharacterized gene 66 protein</fullName>
    </recommendedName>
</protein>
<keyword id="KW-1185">Reference proteome</keyword>
<name>UL49_SHV21</name>
<organism>
    <name type="scientific">Saimiriine herpesvirus 2 (strain 11)</name>
    <name type="common">SaHV-2</name>
    <name type="synonym">Herpesvirus saimiri</name>
    <dbReference type="NCBI Taxonomy" id="10383"/>
    <lineage>
        <taxon>Viruses</taxon>
        <taxon>Duplodnaviria</taxon>
        <taxon>Heunggongvirae</taxon>
        <taxon>Peploviricota</taxon>
        <taxon>Herviviricetes</taxon>
        <taxon>Herpesvirales</taxon>
        <taxon>Orthoherpesviridae</taxon>
        <taxon>Gammaherpesvirinae</taxon>
        <taxon>Rhadinovirus</taxon>
        <taxon>Rhadinovirus saimiriinegamma2</taxon>
        <taxon>Saimiriine herpesvirus 2</taxon>
    </lineage>
</organism>
<comment type="similarity">
    <text evidence="1">Belongs to the herpesviridae UL49 family.</text>
</comment>
<reference key="1">
    <citation type="journal article" date="1992" name="J. Virol.">
        <title>Primary structure of the herpesvirus saimiri genome.</title>
        <authorList>
            <person name="Albrecht J.-C."/>
            <person name="Nicholas J."/>
            <person name="Biller D."/>
            <person name="Cameron K.R."/>
            <person name="Biesinger B."/>
            <person name="Newman C."/>
            <person name="Wittmann S."/>
            <person name="Craxton M.A."/>
            <person name="Coleman H."/>
            <person name="Fleckenstein B."/>
            <person name="Honess R.W."/>
        </authorList>
    </citation>
    <scope>NUCLEOTIDE SEQUENCE [LARGE SCALE GENOMIC DNA]</scope>
</reference>
<reference key="2">
    <citation type="journal article" date="1992" name="Virology">
        <title>Analysis of nucleotide sequence of the rightmost 43 kbp of herpesvirus saimiri (HVS) L-DNA: general conservation of genetic organization between HVS and Epstein-Barr virus.</title>
        <authorList>
            <person name="Nicholas J."/>
            <person name="Cameron K.R."/>
            <person name="Coleman H."/>
            <person name="Newman C."/>
            <person name="Honess R.W."/>
        </authorList>
    </citation>
    <scope>NUCLEOTIDE SEQUENCE [GENOMIC DNA]</scope>
</reference>
<proteinExistence type="inferred from homology"/>
<evidence type="ECO:0000305" key="1"/>
<gene>
    <name type="primary">66</name>
    <name type="synonym">ECLF6</name>
</gene>
<accession>Q01046</accession>
<dbReference type="EMBL" id="X64346">
    <property type="protein sequence ID" value="CAA45689.1"/>
    <property type="molecule type" value="Genomic_DNA"/>
</dbReference>
<dbReference type="EMBL" id="M86409">
    <property type="protein sequence ID" value="AAA46142.1"/>
    <property type="molecule type" value="Genomic_DNA"/>
</dbReference>
<dbReference type="RefSeq" id="NP_040268.1">
    <property type="nucleotide sequence ID" value="NC_001350.1"/>
</dbReference>
<dbReference type="KEGG" id="vg:1682499"/>
<dbReference type="Proteomes" id="UP000000587">
    <property type="component" value="Segment"/>
</dbReference>
<dbReference type="GO" id="GO:0019033">
    <property type="term" value="C:viral tegument"/>
    <property type="evidence" value="ECO:0007669"/>
    <property type="project" value="InterPro"/>
</dbReference>
<dbReference type="GO" id="GO:0016032">
    <property type="term" value="P:viral process"/>
    <property type="evidence" value="ECO:0007669"/>
    <property type="project" value="InterPro"/>
</dbReference>
<dbReference type="InterPro" id="IPR004339">
    <property type="entry name" value="UL49"/>
</dbReference>
<dbReference type="Pfam" id="PF03117">
    <property type="entry name" value="Herpes_UL49_1"/>
    <property type="match status" value="1"/>
</dbReference>
<organismHost>
    <name type="scientific">Saimiri sciureus</name>
    <name type="common">Common squirrel monkey</name>
    <dbReference type="NCBI Taxonomy" id="9521"/>
</organismHost>
<feature type="chain" id="PRO_0000116207" description="Uncharacterized gene 66 protein">
    <location>
        <begin position="1"/>
        <end position="435"/>
    </location>
</feature>
<sequence>MDTIQEKYMDNYLKFSGCGCDNFKVERTLNSLLQPLQIDSSDFIKFVTYGGCWINEHCLPSWPYFLDRCSTISEFLSFWCGIVWDTRRTQVHKFKLIKLTQCLFRAYIVVVWVVFPKCRLDFKPKKFLENVWYKYINMPFYKAIVTFMLNLNISIKHPLIQFQSCLPWDLSILRRKNKLFCSTLMPLSVPAPSQRRENENLFVHSDFDDQSHEFALMAALKQQGAMVPCGNPLDAMIKVLCFNSMIQNKYAIIPMDNIEKTENFDLVLKILGYNILSSVFGLPIICKKIKDKIIKNTYSQHIIVCIECGHCLNFGRGKSKNLNFPPTHVFYCRDQKIKQFTICGTSGRIYCSYCGCSQFRKFPMVEANIIRAVIANNAACMAQCASQQFDVVVPCLGMCGSCIFKRVTVQSLLYLTSKIESLCCVKCSGVIYNYA</sequence>